<sequence length="232" mass="25013">MAKMGKKYSESIKLIDKNSLYTPSEAIDLTLKTAKAKFDETIELSIRLGVDPRHADQQVRGAVVLPHGTGKKVRVLVFAKGDKAKEAEAAGADYVGAEEYLDKIQKENWFDFDVVVATPDMMGVVGRLGRVLGPKGLMPNPKSGTVTFDVAKAIADIKAGKVEYRLDKTAIIHVPIGKKSFGEEKLAENYNVLMEAIVKAKPAAAKGQYIKSLSISSTMGPGVKINPAKVLA</sequence>
<accession>A0PXT5</accession>
<proteinExistence type="inferred from homology"/>
<comment type="function">
    <text evidence="1">Binds directly to 23S rRNA. The L1 stalk is quite mobile in the ribosome, and is involved in E site tRNA release.</text>
</comment>
<comment type="function">
    <text evidence="1">Protein L1 is also a translational repressor protein, it controls the translation of the L11 operon by binding to its mRNA.</text>
</comment>
<comment type="subunit">
    <text evidence="1">Part of the 50S ribosomal subunit.</text>
</comment>
<comment type="similarity">
    <text evidence="1">Belongs to the universal ribosomal protein uL1 family.</text>
</comment>
<organism>
    <name type="scientific">Clostridium novyi (strain NT)</name>
    <dbReference type="NCBI Taxonomy" id="386415"/>
    <lineage>
        <taxon>Bacteria</taxon>
        <taxon>Bacillati</taxon>
        <taxon>Bacillota</taxon>
        <taxon>Clostridia</taxon>
        <taxon>Eubacteriales</taxon>
        <taxon>Clostridiaceae</taxon>
        <taxon>Clostridium</taxon>
    </lineage>
</organism>
<name>RL1_CLONN</name>
<gene>
    <name evidence="1" type="primary">rplA</name>
    <name type="ordered locus">NT01CX_1104</name>
</gene>
<feature type="chain" id="PRO_0000307993" description="Large ribosomal subunit protein uL1">
    <location>
        <begin position="1"/>
        <end position="232"/>
    </location>
</feature>
<dbReference type="EMBL" id="CP000382">
    <property type="protein sequence ID" value="ABK61559.1"/>
    <property type="molecule type" value="Genomic_DNA"/>
</dbReference>
<dbReference type="SMR" id="A0PXT5"/>
<dbReference type="STRING" id="386415.NT01CX_1104"/>
<dbReference type="KEGG" id="cno:NT01CX_1104"/>
<dbReference type="eggNOG" id="COG0081">
    <property type="taxonomic scope" value="Bacteria"/>
</dbReference>
<dbReference type="HOGENOM" id="CLU_062853_0_0_9"/>
<dbReference type="Proteomes" id="UP000008220">
    <property type="component" value="Chromosome"/>
</dbReference>
<dbReference type="GO" id="GO:0015934">
    <property type="term" value="C:large ribosomal subunit"/>
    <property type="evidence" value="ECO:0007669"/>
    <property type="project" value="InterPro"/>
</dbReference>
<dbReference type="GO" id="GO:0019843">
    <property type="term" value="F:rRNA binding"/>
    <property type="evidence" value="ECO:0007669"/>
    <property type="project" value="UniProtKB-UniRule"/>
</dbReference>
<dbReference type="GO" id="GO:0003735">
    <property type="term" value="F:structural constituent of ribosome"/>
    <property type="evidence" value="ECO:0007669"/>
    <property type="project" value="InterPro"/>
</dbReference>
<dbReference type="GO" id="GO:0000049">
    <property type="term" value="F:tRNA binding"/>
    <property type="evidence" value="ECO:0007669"/>
    <property type="project" value="UniProtKB-KW"/>
</dbReference>
<dbReference type="GO" id="GO:0006417">
    <property type="term" value="P:regulation of translation"/>
    <property type="evidence" value="ECO:0007669"/>
    <property type="project" value="UniProtKB-KW"/>
</dbReference>
<dbReference type="GO" id="GO:0006412">
    <property type="term" value="P:translation"/>
    <property type="evidence" value="ECO:0007669"/>
    <property type="project" value="UniProtKB-UniRule"/>
</dbReference>
<dbReference type="CDD" id="cd00403">
    <property type="entry name" value="Ribosomal_L1"/>
    <property type="match status" value="1"/>
</dbReference>
<dbReference type="FunFam" id="3.40.50.790:FF:000001">
    <property type="entry name" value="50S ribosomal protein L1"/>
    <property type="match status" value="1"/>
</dbReference>
<dbReference type="Gene3D" id="3.30.190.20">
    <property type="match status" value="1"/>
</dbReference>
<dbReference type="Gene3D" id="3.40.50.790">
    <property type="match status" value="1"/>
</dbReference>
<dbReference type="HAMAP" id="MF_01318_B">
    <property type="entry name" value="Ribosomal_uL1_B"/>
    <property type="match status" value="1"/>
</dbReference>
<dbReference type="InterPro" id="IPR005878">
    <property type="entry name" value="Ribosom_uL1_bac-type"/>
</dbReference>
<dbReference type="InterPro" id="IPR002143">
    <property type="entry name" value="Ribosomal_uL1"/>
</dbReference>
<dbReference type="InterPro" id="IPR023674">
    <property type="entry name" value="Ribosomal_uL1-like"/>
</dbReference>
<dbReference type="InterPro" id="IPR028364">
    <property type="entry name" value="Ribosomal_uL1/biogenesis"/>
</dbReference>
<dbReference type="InterPro" id="IPR016095">
    <property type="entry name" value="Ribosomal_uL1_3-a/b-sand"/>
</dbReference>
<dbReference type="InterPro" id="IPR023673">
    <property type="entry name" value="Ribosomal_uL1_CS"/>
</dbReference>
<dbReference type="NCBIfam" id="TIGR01169">
    <property type="entry name" value="rplA_bact"/>
    <property type="match status" value="1"/>
</dbReference>
<dbReference type="PANTHER" id="PTHR36427">
    <property type="entry name" value="54S RIBOSOMAL PROTEIN L1, MITOCHONDRIAL"/>
    <property type="match status" value="1"/>
</dbReference>
<dbReference type="PANTHER" id="PTHR36427:SF3">
    <property type="entry name" value="LARGE RIBOSOMAL SUBUNIT PROTEIN UL1M"/>
    <property type="match status" value="1"/>
</dbReference>
<dbReference type="Pfam" id="PF00687">
    <property type="entry name" value="Ribosomal_L1"/>
    <property type="match status" value="1"/>
</dbReference>
<dbReference type="PIRSF" id="PIRSF002155">
    <property type="entry name" value="Ribosomal_L1"/>
    <property type="match status" value="1"/>
</dbReference>
<dbReference type="SUPFAM" id="SSF56808">
    <property type="entry name" value="Ribosomal protein L1"/>
    <property type="match status" value="1"/>
</dbReference>
<dbReference type="PROSITE" id="PS01199">
    <property type="entry name" value="RIBOSOMAL_L1"/>
    <property type="match status" value="1"/>
</dbReference>
<protein>
    <recommendedName>
        <fullName evidence="1">Large ribosomal subunit protein uL1</fullName>
    </recommendedName>
    <alternativeName>
        <fullName evidence="2">50S ribosomal protein L1</fullName>
    </alternativeName>
</protein>
<keyword id="KW-1185">Reference proteome</keyword>
<keyword id="KW-0678">Repressor</keyword>
<keyword id="KW-0687">Ribonucleoprotein</keyword>
<keyword id="KW-0689">Ribosomal protein</keyword>
<keyword id="KW-0694">RNA-binding</keyword>
<keyword id="KW-0699">rRNA-binding</keyword>
<keyword id="KW-0810">Translation regulation</keyword>
<keyword id="KW-0820">tRNA-binding</keyword>
<evidence type="ECO:0000255" key="1">
    <source>
        <dbReference type="HAMAP-Rule" id="MF_01318"/>
    </source>
</evidence>
<evidence type="ECO:0000305" key="2"/>
<reference key="1">
    <citation type="journal article" date="2006" name="Nat. Biotechnol.">
        <title>The genome and transcriptomes of the anti-tumor agent Clostridium novyi-NT.</title>
        <authorList>
            <person name="Bettegowda C."/>
            <person name="Huang X."/>
            <person name="Lin J."/>
            <person name="Cheong I."/>
            <person name="Kohli M."/>
            <person name="Szabo S.A."/>
            <person name="Zhang X."/>
            <person name="Diaz L.A. Jr."/>
            <person name="Velculescu V.E."/>
            <person name="Parmigiani G."/>
            <person name="Kinzler K.W."/>
            <person name="Vogelstein B."/>
            <person name="Zhou S."/>
        </authorList>
    </citation>
    <scope>NUCLEOTIDE SEQUENCE [LARGE SCALE GENOMIC DNA]</scope>
    <source>
        <strain>NT</strain>
    </source>
</reference>